<sequence>MHGHGGYDSDFSDDERCGESSKRKKRTVEDDLLLQKPFQKEKHGKVAHKQVAAELLDREEARNRRFHLIAMDAYQRHTKFVNDYILYYGGKKEDFKRLGENDKTDLDVIRENHRFLWNEEDEMDMTWEKRLAKKYYDKLFKEYCIADLSKYKENKFGFRWRVEKEVISGKGQFFCGNKYCDKKEGLKSWEVNFGYIEHGEKRNALVKLRLCQECSIKLNFHHRRKEIKSKKRKDKTKKDCEESSHKKSRLSSAEEASKKKDKGHSSSKKSEDSLLRNSDEEESASESELWKGPLPETDEKSQEEEFDEYFQDLFL</sequence>
<feature type="chain" id="PRO_0000087148" description="Protein FRA10AC1">
    <location>
        <begin position="1"/>
        <end position="315"/>
    </location>
</feature>
<feature type="region of interest" description="Disordered" evidence="3">
    <location>
        <begin position="1"/>
        <end position="28"/>
    </location>
</feature>
<feature type="region of interest" description="Disordered" evidence="3">
    <location>
        <begin position="226"/>
        <end position="315"/>
    </location>
</feature>
<feature type="compositionally biased region" description="Basic residues" evidence="3">
    <location>
        <begin position="226"/>
        <end position="235"/>
    </location>
</feature>
<feature type="compositionally biased region" description="Basic and acidic residues" evidence="3">
    <location>
        <begin position="236"/>
        <end position="245"/>
    </location>
</feature>
<feature type="compositionally biased region" description="Basic and acidic residues" evidence="3">
    <location>
        <begin position="268"/>
        <end position="278"/>
    </location>
</feature>
<feature type="compositionally biased region" description="Acidic residues" evidence="3">
    <location>
        <begin position="301"/>
        <end position="315"/>
    </location>
</feature>
<feature type="modified residue" description="N-acetylmethionine" evidence="13">
    <location>
        <position position="1"/>
    </location>
</feature>
<feature type="modified residue" description="Phosphoserine" evidence="1">
    <location>
        <position position="9"/>
    </location>
</feature>
<feature type="modified residue" description="Phosphoserine" evidence="15">
    <location>
        <position position="12"/>
    </location>
</feature>
<feature type="modified residue" description="N6-acetyllysine" evidence="2">
    <location>
        <position position="36"/>
    </location>
</feature>
<feature type="modified residue" description="Phosphoserine" evidence="12">
    <location>
        <position position="251"/>
    </location>
</feature>
<feature type="modified residue" description="Phosphoserine" evidence="12">
    <location>
        <position position="252"/>
    </location>
</feature>
<feature type="modified residue" description="Phosphoserine" evidence="14 15">
    <location>
        <position position="278"/>
    </location>
</feature>
<feature type="modified residue" description="Phosphoserine" evidence="2">
    <location>
        <position position="283"/>
    </location>
</feature>
<feature type="modified residue" description="Phosphoserine" evidence="2">
    <location>
        <position position="285"/>
    </location>
</feature>
<feature type="splice variant" id="VSP_015123" description="In isoform 3." evidence="9">
    <original>RNSDEEESASESELWKGPLPETDEKSQEEEFDEYFQDLFL</original>
    <variation>RRMLEELQMFTWEKSERMGGKRLIIIIGEELSANVTTLKL</variation>
    <location>
        <begin position="276"/>
        <end position="315"/>
    </location>
</feature>
<feature type="splice variant" id="VSP_015124" description="In isoform 5." evidence="9">
    <original>RNSDEEESASESELWKGPLPETDEKSQEEEFDEYFQDLFL</original>
    <variation>NGVMLFHPGWSAVARSQLTAAPASQVQTNNHYWRGVVC</variation>
    <location>
        <begin position="276"/>
        <end position="315"/>
    </location>
</feature>
<feature type="splice variant" id="VSP_015125" description="In isoform 4." evidence="9">
    <original>RNSDEEESASESELWKG</original>
    <variation>KTYFVGLLSESNEKTYM</variation>
    <location>
        <begin position="276"/>
        <end position="292"/>
    </location>
</feature>
<feature type="splice variant" id="VSP_015126" description="In isoform 2." evidence="9">
    <original>R</original>
    <variation>N</variation>
    <location>
        <position position="276"/>
    </location>
</feature>
<feature type="splice variant" id="VSP_015127" description="In isoform 2." evidence="9">
    <location>
        <begin position="277"/>
        <end position="315"/>
    </location>
</feature>
<feature type="splice variant" id="VSP_015128" description="In isoform 4." evidence="9">
    <location>
        <begin position="293"/>
        <end position="315"/>
    </location>
</feature>
<feature type="sequence variant" id="VAR_023237" description="In dbSNP:rs726817." evidence="4 5 13 15">
    <original>R</original>
    <variation>H</variation>
    <location>
        <position position="16"/>
    </location>
</feature>
<feature type="sequence variant" id="VAR_023238" description="In dbSNP:rs2275438." evidence="4 5">
    <original>T</original>
    <variation>R</variation>
    <location>
        <position position="78"/>
    </location>
</feature>
<feature type="sequence variant" id="VAR_087878" description="In NEDGFC." evidence="8">
    <location>
        <begin position="110"/>
        <end position="315"/>
    </location>
</feature>
<feature type="sequence variant" id="VAR_087879" description="In NEDGFC." evidence="7">
    <location>
        <begin position="161"/>
        <end position="315"/>
    </location>
</feature>
<feature type="sequence variant" id="VAR_087880" description="In NEDGFC; uncertain significance; decreased protein abundance; no effect on protein localization." evidence="6">
    <location>
        <position position="165"/>
    </location>
</feature>
<feature type="sequence variant" id="VAR_056872" description="In dbSNP:rs11187583.">
    <original>S</original>
    <variation>F</variation>
    <location>
        <position position="251"/>
    </location>
</feature>
<feature type="sequence conflict" description="In Ref. 1; CAD24470/CAD24471/CAD24472/CAD24473/CAD24474." evidence="10" ref="1">
    <original>V</original>
    <variation>I</variation>
    <location>
        <position position="81"/>
    </location>
</feature>
<accession>Q70Z53</accession>
<accession>C9JCR4</accession>
<accession>C9JCR5</accession>
<accession>C9JMY4</accession>
<accession>Q70Z49</accession>
<accession>Q70Z50</accession>
<accession>Q70Z51</accession>
<accession>Q70Z52</accession>
<accession>Q8N293</accession>
<accession>Q8WVH5</accession>
<accession>Q96JQ8</accession>
<protein>
    <recommendedName>
        <fullName>Protein FRA10AC1</fullName>
    </recommendedName>
</protein>
<dbReference type="EMBL" id="AJ431721">
    <property type="protein sequence ID" value="CAD24470.1"/>
    <property type="molecule type" value="mRNA"/>
</dbReference>
<dbReference type="EMBL" id="AJ431722">
    <property type="protein sequence ID" value="CAD24471.1"/>
    <property type="molecule type" value="mRNA"/>
</dbReference>
<dbReference type="EMBL" id="AJ431723">
    <property type="protein sequence ID" value="CAD24472.1"/>
    <property type="molecule type" value="mRNA"/>
</dbReference>
<dbReference type="EMBL" id="AJ431724">
    <property type="protein sequence ID" value="CAD24473.1"/>
    <property type="molecule type" value="mRNA"/>
</dbReference>
<dbReference type="EMBL" id="AJ431725">
    <property type="protein sequence ID" value="CAD24474.1"/>
    <property type="molecule type" value="mRNA"/>
</dbReference>
<dbReference type="EMBL" id="AK090955">
    <property type="protein sequence ID" value="BAC03556.1"/>
    <property type="molecule type" value="mRNA"/>
</dbReference>
<dbReference type="EMBL" id="AL157396">
    <property type="status" value="NOT_ANNOTATED_CDS"/>
    <property type="molecule type" value="Genomic_DNA"/>
</dbReference>
<dbReference type="EMBL" id="BC018007">
    <property type="protein sequence ID" value="AAH18007.1"/>
    <property type="molecule type" value="mRNA"/>
</dbReference>
<dbReference type="EMBL" id="AF305826">
    <property type="protein sequence ID" value="AAK55529.1"/>
    <property type="status" value="ALT_SEQ"/>
    <property type="molecule type" value="mRNA"/>
</dbReference>
<dbReference type="CCDS" id="CCDS7430.1">
    <molecule id="Q70Z53-1"/>
</dbReference>
<dbReference type="RefSeq" id="NP_001334641.1">
    <molecule id="Q70Z53-1"/>
    <property type="nucleotide sequence ID" value="NM_001347712.2"/>
</dbReference>
<dbReference type="RefSeq" id="NP_001334642.1">
    <molecule id="Q70Z53-1"/>
    <property type="nucleotide sequence ID" value="NM_001347713.2"/>
</dbReference>
<dbReference type="RefSeq" id="NP_001334643.1">
    <molecule id="Q70Z53-1"/>
    <property type="nucleotide sequence ID" value="NM_001347714.2"/>
</dbReference>
<dbReference type="RefSeq" id="NP_001334644.1">
    <molecule id="Q70Z53-1"/>
    <property type="nucleotide sequence ID" value="NM_001347715.2"/>
</dbReference>
<dbReference type="RefSeq" id="NP_660289.2">
    <molecule id="Q70Z53-1"/>
    <property type="nucleotide sequence ID" value="NM_145246.4"/>
</dbReference>
<dbReference type="RefSeq" id="XP_016871150.1">
    <property type="nucleotide sequence ID" value="XM_017015661.1"/>
</dbReference>
<dbReference type="BioGRID" id="125626">
    <property type="interactions" value="51"/>
</dbReference>
<dbReference type="FunCoup" id="Q70Z53">
    <property type="interactions" value="2092"/>
</dbReference>
<dbReference type="IntAct" id="Q70Z53">
    <property type="interactions" value="42"/>
</dbReference>
<dbReference type="MINT" id="Q70Z53"/>
<dbReference type="STRING" id="9606.ENSP00000360488"/>
<dbReference type="iPTMnet" id="Q70Z53"/>
<dbReference type="PhosphoSitePlus" id="Q70Z53"/>
<dbReference type="BioMuta" id="FRA10AC1"/>
<dbReference type="DMDM" id="296439361"/>
<dbReference type="jPOST" id="Q70Z53"/>
<dbReference type="MassIVE" id="Q70Z53"/>
<dbReference type="PaxDb" id="9606-ENSP00000360488"/>
<dbReference type="PeptideAtlas" id="Q70Z53"/>
<dbReference type="ProteomicsDB" id="68583">
    <molecule id="Q70Z53-1"/>
</dbReference>
<dbReference type="ProteomicsDB" id="68584">
    <molecule id="Q70Z53-2"/>
</dbReference>
<dbReference type="ProteomicsDB" id="68585">
    <molecule id="Q70Z53-3"/>
</dbReference>
<dbReference type="ProteomicsDB" id="68586">
    <molecule id="Q70Z53-4"/>
</dbReference>
<dbReference type="ProteomicsDB" id="68587">
    <molecule id="Q70Z53-5"/>
</dbReference>
<dbReference type="Pumba" id="Q70Z53"/>
<dbReference type="Antibodypedia" id="30489">
    <property type="antibodies" value="101 antibodies from 17 providers"/>
</dbReference>
<dbReference type="DNASU" id="118924"/>
<dbReference type="Ensembl" id="ENST00000359204.5">
    <molecule id="Q70Z53-1"/>
    <property type="protein sequence ID" value="ENSP00000360488.3"/>
    <property type="gene ID" value="ENSG00000148690.12"/>
</dbReference>
<dbReference type="GeneID" id="118924"/>
<dbReference type="KEGG" id="hsa:118924"/>
<dbReference type="MANE-Select" id="ENST00000359204.5">
    <property type="protein sequence ID" value="ENSP00000360488.3"/>
    <property type="RefSeq nucleotide sequence ID" value="NM_145246.5"/>
    <property type="RefSeq protein sequence ID" value="NP_660289.2"/>
</dbReference>
<dbReference type="UCSC" id="uc001kiz.2">
    <molecule id="Q70Z53-1"/>
    <property type="organism name" value="human"/>
</dbReference>
<dbReference type="AGR" id="HGNC:1162"/>
<dbReference type="CTD" id="118924"/>
<dbReference type="DisGeNET" id="118924"/>
<dbReference type="GeneCards" id="FRA10AC1"/>
<dbReference type="HGNC" id="HGNC:1162">
    <property type="gene designation" value="FRA10AC1"/>
</dbReference>
<dbReference type="HPA" id="ENSG00000148690">
    <property type="expression patterns" value="Low tissue specificity"/>
</dbReference>
<dbReference type="MalaCards" id="FRA10AC1"/>
<dbReference type="MIM" id="608866">
    <property type="type" value="gene"/>
</dbReference>
<dbReference type="MIM" id="620113">
    <property type="type" value="phenotype"/>
</dbReference>
<dbReference type="neXtProt" id="NX_Q70Z53"/>
<dbReference type="OpenTargets" id="ENSG00000148690"/>
<dbReference type="PharmGKB" id="PA25476"/>
<dbReference type="VEuPathDB" id="HostDB:ENSG00000148690"/>
<dbReference type="eggNOG" id="KOG1297">
    <property type="taxonomic scope" value="Eukaryota"/>
</dbReference>
<dbReference type="GeneTree" id="ENSGT00390000017833"/>
<dbReference type="HOGENOM" id="CLU_061714_0_1_1"/>
<dbReference type="InParanoid" id="Q70Z53"/>
<dbReference type="OMA" id="EYFQDMF"/>
<dbReference type="OrthoDB" id="197967at2759"/>
<dbReference type="PAN-GO" id="Q70Z53">
    <property type="GO annotations" value="2 GO annotations based on evolutionary models"/>
</dbReference>
<dbReference type="PhylomeDB" id="Q70Z53"/>
<dbReference type="TreeFam" id="TF323667"/>
<dbReference type="PathwayCommons" id="Q70Z53"/>
<dbReference type="SignaLink" id="Q70Z53"/>
<dbReference type="BioGRID-ORCS" id="118924">
    <property type="hits" value="19 hits in 1117 CRISPR screens"/>
</dbReference>
<dbReference type="ChiTaRS" id="FRA10AC1">
    <property type="organism name" value="human"/>
</dbReference>
<dbReference type="GeneWiki" id="C10orf4"/>
<dbReference type="GenomeRNAi" id="118924"/>
<dbReference type="Pharos" id="Q70Z53">
    <property type="development level" value="Tbio"/>
</dbReference>
<dbReference type="PRO" id="PR:Q70Z53"/>
<dbReference type="Proteomes" id="UP000005640">
    <property type="component" value="Chromosome 10"/>
</dbReference>
<dbReference type="RNAct" id="Q70Z53">
    <property type="molecule type" value="protein"/>
</dbReference>
<dbReference type="Bgee" id="ENSG00000148690">
    <property type="expression patterns" value="Expressed in tendon of biceps brachii and 195 other cell types or tissues"/>
</dbReference>
<dbReference type="GO" id="GO:0005634">
    <property type="term" value="C:nucleus"/>
    <property type="evidence" value="ECO:0000315"/>
    <property type="project" value="UniProtKB"/>
</dbReference>
<dbReference type="GO" id="GO:0016791">
    <property type="term" value="F:phosphatase activity"/>
    <property type="evidence" value="ECO:0000318"/>
    <property type="project" value="GO_Central"/>
</dbReference>
<dbReference type="GO" id="GO:0000398">
    <property type="term" value="P:mRNA splicing, via spliceosome"/>
    <property type="evidence" value="ECO:0000315"/>
    <property type="project" value="UniProtKB"/>
</dbReference>
<dbReference type="InterPro" id="IPR019129">
    <property type="entry name" value="Folate-sensitive_fs_Fra10Ac1"/>
</dbReference>
<dbReference type="InterPro" id="IPR050645">
    <property type="entry name" value="Histidine_acid_phosphatase"/>
</dbReference>
<dbReference type="PANTHER" id="PTHR11567">
    <property type="entry name" value="ACID PHOSPHATASE-RELATED"/>
    <property type="match status" value="1"/>
</dbReference>
<dbReference type="PANTHER" id="PTHR11567:SF25">
    <property type="entry name" value="PROTEIN FRA10AC1"/>
    <property type="match status" value="1"/>
</dbReference>
<dbReference type="Pfam" id="PF09725">
    <property type="entry name" value="Fra10Ac1"/>
    <property type="match status" value="1"/>
</dbReference>
<keyword id="KW-0007">Acetylation</keyword>
<keyword id="KW-0025">Alternative splicing</keyword>
<keyword id="KW-0225">Disease variant</keyword>
<keyword id="KW-0991">Intellectual disability</keyword>
<keyword id="KW-0539">Nucleus</keyword>
<keyword id="KW-0597">Phosphoprotein</keyword>
<keyword id="KW-1267">Proteomics identification</keyword>
<keyword id="KW-1185">Reference proteome</keyword>
<reference key="1">
    <citation type="journal article" date="2004" name="Genomics">
        <title>Folate-sensitive fragile site FRA10A is due to an expansion of a CGG repeat in a novel gene, FRA10AC1, encoding a nuclear protein.</title>
        <authorList>
            <person name="Sarafidou T."/>
            <person name="Kahl C."/>
            <person name="Martinez-Garay I."/>
            <person name="Mangelsdorf M."/>
            <person name="Gesk S."/>
            <person name="Baker E."/>
            <person name="Kokkinaki M."/>
            <person name="Talley P."/>
            <person name="Maltby E.L."/>
            <person name="French L."/>
            <person name="Harder L."/>
            <person name="Hinzmann B."/>
            <person name="Nobile C."/>
            <person name="Richkind K."/>
            <person name="Finnis M."/>
            <person name="Deloukas P."/>
            <person name="Sutherland G.R."/>
            <person name="Kutsche K."/>
            <person name="Moschonas N.K."/>
            <person name="Siebert R."/>
            <person name="Gecz J."/>
        </authorList>
    </citation>
    <scope>NUCLEOTIDE SEQUENCE [MRNA] (ISOFORMS 1; 2; 3; 4 AND 5)</scope>
    <scope>SUBCELLULAR LOCATION</scope>
    <scope>TISSUE SPECIFICITY</scope>
    <scope>POLYMORPHISM</scope>
    <scope>VARIANTS HIS-16 AND ARG-78</scope>
</reference>
<reference key="2">
    <citation type="journal article" date="2004" name="Nat. Genet.">
        <title>Complete sequencing and characterization of 21,243 full-length human cDNAs.</title>
        <authorList>
            <person name="Ota T."/>
            <person name="Suzuki Y."/>
            <person name="Nishikawa T."/>
            <person name="Otsuki T."/>
            <person name="Sugiyama T."/>
            <person name="Irie R."/>
            <person name="Wakamatsu A."/>
            <person name="Hayashi K."/>
            <person name="Sato H."/>
            <person name="Nagai K."/>
            <person name="Kimura K."/>
            <person name="Makita H."/>
            <person name="Sekine M."/>
            <person name="Obayashi M."/>
            <person name="Nishi T."/>
            <person name="Shibahara T."/>
            <person name="Tanaka T."/>
            <person name="Ishii S."/>
            <person name="Yamamoto J."/>
            <person name="Saito K."/>
            <person name="Kawai Y."/>
            <person name="Isono Y."/>
            <person name="Nakamura Y."/>
            <person name="Nagahari K."/>
            <person name="Murakami K."/>
            <person name="Yasuda T."/>
            <person name="Iwayanagi T."/>
            <person name="Wagatsuma M."/>
            <person name="Shiratori A."/>
            <person name="Sudo H."/>
            <person name="Hosoiri T."/>
            <person name="Kaku Y."/>
            <person name="Kodaira H."/>
            <person name="Kondo H."/>
            <person name="Sugawara M."/>
            <person name="Takahashi M."/>
            <person name="Kanda K."/>
            <person name="Yokoi T."/>
            <person name="Furuya T."/>
            <person name="Kikkawa E."/>
            <person name="Omura Y."/>
            <person name="Abe K."/>
            <person name="Kamihara K."/>
            <person name="Katsuta N."/>
            <person name="Sato K."/>
            <person name="Tanikawa M."/>
            <person name="Yamazaki M."/>
            <person name="Ninomiya K."/>
            <person name="Ishibashi T."/>
            <person name="Yamashita H."/>
            <person name="Murakawa K."/>
            <person name="Fujimori K."/>
            <person name="Tanai H."/>
            <person name="Kimata M."/>
            <person name="Watanabe M."/>
            <person name="Hiraoka S."/>
            <person name="Chiba Y."/>
            <person name="Ishida S."/>
            <person name="Ono Y."/>
            <person name="Takiguchi S."/>
            <person name="Watanabe S."/>
            <person name="Yosida M."/>
            <person name="Hotuta T."/>
            <person name="Kusano J."/>
            <person name="Kanehori K."/>
            <person name="Takahashi-Fujii A."/>
            <person name="Hara H."/>
            <person name="Tanase T.-O."/>
            <person name="Nomura Y."/>
            <person name="Togiya S."/>
            <person name="Komai F."/>
            <person name="Hara R."/>
            <person name="Takeuchi K."/>
            <person name="Arita M."/>
            <person name="Imose N."/>
            <person name="Musashino K."/>
            <person name="Yuuki H."/>
            <person name="Oshima A."/>
            <person name="Sasaki N."/>
            <person name="Aotsuka S."/>
            <person name="Yoshikawa Y."/>
            <person name="Matsunawa H."/>
            <person name="Ichihara T."/>
            <person name="Shiohata N."/>
            <person name="Sano S."/>
            <person name="Moriya S."/>
            <person name="Momiyama H."/>
            <person name="Satoh N."/>
            <person name="Takami S."/>
            <person name="Terashima Y."/>
            <person name="Suzuki O."/>
            <person name="Nakagawa S."/>
            <person name="Senoh A."/>
            <person name="Mizoguchi H."/>
            <person name="Goto Y."/>
            <person name="Shimizu F."/>
            <person name="Wakebe H."/>
            <person name="Hishigaki H."/>
            <person name="Watanabe T."/>
            <person name="Sugiyama A."/>
            <person name="Takemoto M."/>
            <person name="Kawakami B."/>
            <person name="Yamazaki M."/>
            <person name="Watanabe K."/>
            <person name="Kumagai A."/>
            <person name="Itakura S."/>
            <person name="Fukuzumi Y."/>
            <person name="Fujimori Y."/>
            <person name="Komiyama M."/>
            <person name="Tashiro H."/>
            <person name="Tanigami A."/>
            <person name="Fujiwara T."/>
            <person name="Ono T."/>
            <person name="Yamada K."/>
            <person name="Fujii Y."/>
            <person name="Ozaki K."/>
            <person name="Hirao M."/>
            <person name="Ohmori Y."/>
            <person name="Kawabata A."/>
            <person name="Hikiji T."/>
            <person name="Kobatake N."/>
            <person name="Inagaki H."/>
            <person name="Ikema Y."/>
            <person name="Okamoto S."/>
            <person name="Okitani R."/>
            <person name="Kawakami T."/>
            <person name="Noguchi S."/>
            <person name="Itoh T."/>
            <person name="Shigeta K."/>
            <person name="Senba T."/>
            <person name="Matsumura K."/>
            <person name="Nakajima Y."/>
            <person name="Mizuno T."/>
            <person name="Morinaga M."/>
            <person name="Sasaki M."/>
            <person name="Togashi T."/>
            <person name="Oyama M."/>
            <person name="Hata H."/>
            <person name="Watanabe M."/>
            <person name="Komatsu T."/>
            <person name="Mizushima-Sugano J."/>
            <person name="Satoh T."/>
            <person name="Shirai Y."/>
            <person name="Takahashi Y."/>
            <person name="Nakagawa K."/>
            <person name="Okumura K."/>
            <person name="Nagase T."/>
            <person name="Nomura N."/>
            <person name="Kikuchi H."/>
            <person name="Masuho Y."/>
            <person name="Yamashita R."/>
            <person name="Nakai K."/>
            <person name="Yada T."/>
            <person name="Nakamura Y."/>
            <person name="Ohara O."/>
            <person name="Isogai T."/>
            <person name="Sugano S."/>
        </authorList>
    </citation>
    <scope>NUCLEOTIDE SEQUENCE [LARGE SCALE MRNA] (ISOFORM 1)</scope>
    <source>
        <tissue>Amygdala</tissue>
    </source>
</reference>
<reference key="3">
    <citation type="journal article" date="2004" name="Nature">
        <title>The DNA sequence and comparative analysis of human chromosome 10.</title>
        <authorList>
            <person name="Deloukas P."/>
            <person name="Earthrowl M.E."/>
            <person name="Grafham D.V."/>
            <person name="Rubenfield M."/>
            <person name="French L."/>
            <person name="Steward C.A."/>
            <person name="Sims S.K."/>
            <person name="Jones M.C."/>
            <person name="Searle S."/>
            <person name="Scott C."/>
            <person name="Howe K."/>
            <person name="Hunt S.E."/>
            <person name="Andrews T.D."/>
            <person name="Gilbert J.G.R."/>
            <person name="Swarbreck D."/>
            <person name="Ashurst J.L."/>
            <person name="Taylor A."/>
            <person name="Battles J."/>
            <person name="Bird C.P."/>
            <person name="Ainscough R."/>
            <person name="Almeida J.P."/>
            <person name="Ashwell R.I.S."/>
            <person name="Ambrose K.D."/>
            <person name="Babbage A.K."/>
            <person name="Bagguley C.L."/>
            <person name="Bailey J."/>
            <person name="Banerjee R."/>
            <person name="Bates K."/>
            <person name="Beasley H."/>
            <person name="Bray-Allen S."/>
            <person name="Brown A.J."/>
            <person name="Brown J.Y."/>
            <person name="Burford D.C."/>
            <person name="Burrill W."/>
            <person name="Burton J."/>
            <person name="Cahill P."/>
            <person name="Camire D."/>
            <person name="Carter N.P."/>
            <person name="Chapman J.C."/>
            <person name="Clark S.Y."/>
            <person name="Clarke G."/>
            <person name="Clee C.M."/>
            <person name="Clegg S."/>
            <person name="Corby N."/>
            <person name="Coulson A."/>
            <person name="Dhami P."/>
            <person name="Dutta I."/>
            <person name="Dunn M."/>
            <person name="Faulkner L."/>
            <person name="Frankish A."/>
            <person name="Frankland J.A."/>
            <person name="Garner P."/>
            <person name="Garnett J."/>
            <person name="Gribble S."/>
            <person name="Griffiths C."/>
            <person name="Grocock R."/>
            <person name="Gustafson E."/>
            <person name="Hammond S."/>
            <person name="Harley J.L."/>
            <person name="Hart E."/>
            <person name="Heath P.D."/>
            <person name="Ho T.P."/>
            <person name="Hopkins B."/>
            <person name="Horne J."/>
            <person name="Howden P.J."/>
            <person name="Huckle E."/>
            <person name="Hynds C."/>
            <person name="Johnson C."/>
            <person name="Johnson D."/>
            <person name="Kana A."/>
            <person name="Kay M."/>
            <person name="Kimberley A.M."/>
            <person name="Kershaw J.K."/>
            <person name="Kokkinaki M."/>
            <person name="Laird G.K."/>
            <person name="Lawlor S."/>
            <person name="Lee H.M."/>
            <person name="Leongamornlert D.A."/>
            <person name="Laird G."/>
            <person name="Lloyd C."/>
            <person name="Lloyd D.M."/>
            <person name="Loveland J."/>
            <person name="Lovell J."/>
            <person name="McLaren S."/>
            <person name="McLay K.E."/>
            <person name="McMurray A."/>
            <person name="Mashreghi-Mohammadi M."/>
            <person name="Matthews L."/>
            <person name="Milne S."/>
            <person name="Nickerson T."/>
            <person name="Nguyen M."/>
            <person name="Overton-Larty E."/>
            <person name="Palmer S.A."/>
            <person name="Pearce A.V."/>
            <person name="Peck A.I."/>
            <person name="Pelan S."/>
            <person name="Phillimore B."/>
            <person name="Porter K."/>
            <person name="Rice C.M."/>
            <person name="Rogosin A."/>
            <person name="Ross M.T."/>
            <person name="Sarafidou T."/>
            <person name="Sehra H.K."/>
            <person name="Shownkeen R."/>
            <person name="Skuce C.D."/>
            <person name="Smith M."/>
            <person name="Standring L."/>
            <person name="Sycamore N."/>
            <person name="Tester J."/>
            <person name="Thorpe A."/>
            <person name="Torcasso W."/>
            <person name="Tracey A."/>
            <person name="Tromans A."/>
            <person name="Tsolas J."/>
            <person name="Wall M."/>
            <person name="Walsh J."/>
            <person name="Wang H."/>
            <person name="Weinstock K."/>
            <person name="West A.P."/>
            <person name="Willey D.L."/>
            <person name="Whitehead S.L."/>
            <person name="Wilming L."/>
            <person name="Wray P.W."/>
            <person name="Young L."/>
            <person name="Chen Y."/>
            <person name="Lovering R.C."/>
            <person name="Moschonas N.K."/>
            <person name="Siebert R."/>
            <person name="Fechtel K."/>
            <person name="Bentley D."/>
            <person name="Durbin R.M."/>
            <person name="Hubbard T."/>
            <person name="Doucette-Stamm L."/>
            <person name="Beck S."/>
            <person name="Smith D.R."/>
            <person name="Rogers J."/>
        </authorList>
    </citation>
    <scope>NUCLEOTIDE SEQUENCE [LARGE SCALE GENOMIC DNA]</scope>
</reference>
<reference key="4">
    <citation type="journal article" date="2004" name="Genome Res.">
        <title>The status, quality, and expansion of the NIH full-length cDNA project: the Mammalian Gene Collection (MGC).</title>
        <authorList>
            <consortium name="The MGC Project Team"/>
        </authorList>
    </citation>
    <scope>NUCLEOTIDE SEQUENCE [LARGE SCALE MRNA] (ISOFORM 1)</scope>
    <scope>VARIANTS HIS-16 AND ARG-78</scope>
    <source>
        <tissue>Brain</tissue>
    </source>
</reference>
<reference key="5">
    <citation type="journal article" date="2001" name="Genome Res.">
        <title>Gene expression profiling in human fetal liver and identification of tissue- and developmental-stage-specific genes through compiled expression profiles and efficient cloning of full-length cDNAs.</title>
        <authorList>
            <person name="Yu Y."/>
            <person name="Zhang C."/>
            <person name="Zhou G."/>
            <person name="Wu S."/>
            <person name="Qu X."/>
            <person name="Wei H."/>
            <person name="Xing G."/>
            <person name="Dong C."/>
            <person name="Zhai Y."/>
            <person name="Wan J."/>
            <person name="Ouyang S."/>
            <person name="Li L."/>
            <person name="Zhang S."/>
            <person name="Zhou K."/>
            <person name="Zhang Y."/>
            <person name="Wu C."/>
            <person name="He F."/>
        </authorList>
    </citation>
    <scope>NUCLEOTIDE SEQUENCE [LARGE SCALE MRNA] OF 123-315</scope>
    <source>
        <tissue>Fetal liver</tissue>
    </source>
</reference>
<reference key="6">
    <citation type="journal article" date="2008" name="Proc. Natl. Acad. Sci. U.S.A.">
        <title>A quantitative atlas of mitotic phosphorylation.</title>
        <authorList>
            <person name="Dephoure N."/>
            <person name="Zhou C."/>
            <person name="Villen J."/>
            <person name="Beausoleil S.A."/>
            <person name="Bakalarski C.E."/>
            <person name="Elledge S.J."/>
            <person name="Gygi S.P."/>
        </authorList>
    </citation>
    <scope>PHOSPHORYLATION [LARGE SCALE ANALYSIS] AT SER-251 AND SER-252</scope>
    <scope>IDENTIFICATION BY MASS SPECTROMETRY [LARGE SCALE ANALYSIS]</scope>
    <source>
        <tissue>Cervix carcinoma</tissue>
    </source>
</reference>
<reference key="7">
    <citation type="journal article" date="2009" name="Anal. Chem.">
        <title>Lys-N and trypsin cover complementary parts of the phosphoproteome in a refined SCX-based approach.</title>
        <authorList>
            <person name="Gauci S."/>
            <person name="Helbig A.O."/>
            <person name="Slijper M."/>
            <person name="Krijgsveld J."/>
            <person name="Heck A.J."/>
            <person name="Mohammed S."/>
        </authorList>
    </citation>
    <scope>ACETYLATION [LARGE SCALE ANALYSIS] AT MET-1</scope>
    <scope>VARIANT [LARGE SCALE ANALYSIS] HIS-16</scope>
    <scope>IDENTIFICATION BY MASS SPECTROMETRY [LARGE SCALE ANALYSIS]</scope>
</reference>
<reference key="8">
    <citation type="journal article" date="2009" name="Sci. Signal.">
        <title>Quantitative phosphoproteomic analysis of T cell receptor signaling reveals system-wide modulation of protein-protein interactions.</title>
        <authorList>
            <person name="Mayya V."/>
            <person name="Lundgren D.H."/>
            <person name="Hwang S.-I."/>
            <person name="Rezaul K."/>
            <person name="Wu L."/>
            <person name="Eng J.K."/>
            <person name="Rodionov V."/>
            <person name="Han D.K."/>
        </authorList>
    </citation>
    <scope>PHOSPHORYLATION [LARGE SCALE ANALYSIS] AT SER-278</scope>
    <scope>IDENTIFICATION BY MASS SPECTROMETRY [LARGE SCALE ANALYSIS]</scope>
    <source>
        <tissue>Leukemic T-cell</tissue>
    </source>
</reference>
<reference key="9">
    <citation type="journal article" date="2011" name="BMC Syst. Biol.">
        <title>Initial characterization of the human central proteome.</title>
        <authorList>
            <person name="Burkard T.R."/>
            <person name="Planyavsky M."/>
            <person name="Kaupe I."/>
            <person name="Breitwieser F.P."/>
            <person name="Buerckstuemmer T."/>
            <person name="Bennett K.L."/>
            <person name="Superti-Furga G."/>
            <person name="Colinge J."/>
        </authorList>
    </citation>
    <scope>IDENTIFICATION BY MASS SPECTROMETRY [LARGE SCALE ANALYSIS]</scope>
</reference>
<reference key="10">
    <citation type="journal article" date="2013" name="J. Proteome Res.">
        <title>Toward a comprehensive characterization of a human cancer cell phosphoproteome.</title>
        <authorList>
            <person name="Zhou H."/>
            <person name="Di Palma S."/>
            <person name="Preisinger C."/>
            <person name="Peng M."/>
            <person name="Polat A.N."/>
            <person name="Heck A.J."/>
            <person name="Mohammed S."/>
        </authorList>
    </citation>
    <scope>PHOSPHORYLATION [LARGE SCALE ANALYSIS] AT SER-12 AND SER-278</scope>
    <scope>VARIANT [LARGE SCALE ANALYSIS] HIS-16</scope>
    <scope>IDENTIFICATION BY MASS SPECTROMETRY [LARGE SCALE ANALYSIS]</scope>
    <source>
        <tissue>Cervix carcinoma</tissue>
        <tissue>Erythroleukemia</tissue>
    </source>
</reference>
<reference key="11">
    <citation type="journal article" date="2022" name="Brain">
        <title>Biallelic FRA10AC1 variants cause a neurodevelopmental disorder with growth retardation.</title>
        <authorList>
            <person name="von Elsner L."/>
            <person name="Chai G."/>
            <person name="Schneeberger P.E."/>
            <person name="Harms F.L."/>
            <person name="Casar C."/>
            <person name="Qi M."/>
            <person name="Alawi M."/>
            <person name="Abdel-Salam G.M.H."/>
            <person name="Zaki M.S."/>
            <person name="Arndt F."/>
            <person name="Yang X."/>
            <person name="Stanley V."/>
            <person name="Hempel M."/>
            <person name="Gleeson J.G."/>
            <person name="Kutsche K."/>
        </authorList>
    </citation>
    <scope>INVOLVEMENT IN NEDGFC</scope>
    <scope>VARIANT NEDGFC GLU-165 DEL</scope>
    <scope>CHARACTERIZATION OF VARIANT NEDGFC GLU-165 DEL</scope>
    <scope>FUNCTION</scope>
    <scope>INTERACTION WITH ESS2</scope>
    <scope>SUBCELLULAR LOCATION</scope>
</reference>
<reference key="12">
    <citation type="journal article" date="2022" name="Brain">
        <title>Bi-allelic FRA10AC1 variants in a multisystem human syndrome.</title>
        <authorList>
            <person name="Banka S."/>
            <person name="Shalev S."/>
            <person name="Park S.M."/>
            <person name="Wood K.A."/>
            <person name="Thomas H.B."/>
            <person name="Wright H.L."/>
            <person name="Alyahya M."/>
            <person name="Bankier S."/>
            <person name="Alimi O."/>
            <person name="Chervinsky E."/>
            <person name="Zeef L.A.H."/>
            <person name="O'Keefe R.T."/>
        </authorList>
    </citation>
    <scope>VARIANT NEDGFC 110-ARG--LEU-315 DEL</scope>
</reference>
<reference key="13">
    <citation type="journal article" date="2022" name="Neurol. Genet.">
        <title>A Biallelic Variant in FRA10AC1 Is Associated With Neurodevelopmental Disorder and Growth Retardation.</title>
        <authorList>
            <person name="Alsaleh N."/>
            <person name="Alhashem A."/>
            <person name="Tabarki B."/>
            <person name="Mohamed S."/>
            <person name="Alharby E."/>
            <person name="Alkuraya F.S."/>
            <person name="Almontashiri N.A.M."/>
        </authorList>
    </citation>
    <scope>VARIANT NEDGFC 161-ARG--LEU-315 DEL</scope>
</reference>
<name>F10C1_HUMAN</name>
<gene>
    <name type="primary">FRA10AC1</name>
    <name type="synonym">C10orf4</name>
    <name type="ORF">PRO2972</name>
</gene>
<evidence type="ECO:0000250" key="1">
    <source>
        <dbReference type="UniProtKB" id="Q5FVF1"/>
    </source>
</evidence>
<evidence type="ECO:0000250" key="2">
    <source>
        <dbReference type="UniProtKB" id="Q8BP78"/>
    </source>
</evidence>
<evidence type="ECO:0000256" key="3">
    <source>
        <dbReference type="SAM" id="MobiDB-lite"/>
    </source>
</evidence>
<evidence type="ECO:0000269" key="4">
    <source>
    </source>
</evidence>
<evidence type="ECO:0000269" key="5">
    <source>
    </source>
</evidence>
<evidence type="ECO:0000269" key="6">
    <source>
    </source>
</evidence>
<evidence type="ECO:0000269" key="7">
    <source>
    </source>
</evidence>
<evidence type="ECO:0000269" key="8">
    <source>
    </source>
</evidence>
<evidence type="ECO:0000303" key="9">
    <source>
    </source>
</evidence>
<evidence type="ECO:0000305" key="10"/>
<evidence type="ECO:0000305" key="11">
    <source>
    </source>
</evidence>
<evidence type="ECO:0007744" key="12">
    <source>
    </source>
</evidence>
<evidence type="ECO:0007744" key="13">
    <source>
    </source>
</evidence>
<evidence type="ECO:0007744" key="14">
    <source>
    </source>
</evidence>
<evidence type="ECO:0007744" key="15">
    <source>
    </source>
</evidence>
<proteinExistence type="evidence at protein level"/>
<organism>
    <name type="scientific">Homo sapiens</name>
    <name type="common">Human</name>
    <dbReference type="NCBI Taxonomy" id="9606"/>
    <lineage>
        <taxon>Eukaryota</taxon>
        <taxon>Metazoa</taxon>
        <taxon>Chordata</taxon>
        <taxon>Craniata</taxon>
        <taxon>Vertebrata</taxon>
        <taxon>Euteleostomi</taxon>
        <taxon>Mammalia</taxon>
        <taxon>Eutheria</taxon>
        <taxon>Euarchontoglires</taxon>
        <taxon>Primates</taxon>
        <taxon>Haplorrhini</taxon>
        <taxon>Catarrhini</taxon>
        <taxon>Hominidae</taxon>
        <taxon>Homo</taxon>
    </lineage>
</organism>
<comment type="function">
    <text evidence="6">May be involved in pre-mRNA splicing.</text>
</comment>
<comment type="subunit">
    <text evidence="6">Interacts with ESS2.</text>
</comment>
<comment type="interaction">
    <interactant intactId="EBI-710176">
        <id>Q70Z53</id>
    </interactant>
    <interactant intactId="EBI-2555370">
        <id>Q8IWX8</id>
        <label>CHERP</label>
    </interactant>
    <organismsDiffer>false</organismsDiffer>
    <experiments>2</experiments>
</comment>
<comment type="interaction">
    <interactant intactId="EBI-710176">
        <id>Q70Z53</id>
    </interactant>
    <interactant intactId="EBI-3928124">
        <id>Q96DF8</id>
        <label>ESS2</label>
    </interactant>
    <organismsDiffer>false</organismsDiffer>
    <experiments>5</experiments>
</comment>
<comment type="interaction">
    <interactant intactId="EBI-710176">
        <id>Q70Z53</id>
    </interactant>
    <interactant intactId="EBI-713456">
        <id>Q13123</id>
        <label>IK</label>
    </interactant>
    <organismsDiffer>false</organismsDiffer>
    <experiments>2</experiments>
</comment>
<comment type="interaction">
    <interactant intactId="EBI-710176">
        <id>Q70Z53</id>
    </interactant>
    <interactant intactId="EBI-749265">
        <id>Q8N6L0</id>
        <label>KASH5</label>
    </interactant>
    <organismsDiffer>false</organismsDiffer>
    <experiments>3</experiments>
</comment>
<comment type="interaction">
    <interactant intactId="EBI-710176">
        <id>Q70Z53</id>
    </interactant>
    <interactant intactId="EBI-710223">
        <id>Q12852</id>
        <label>MAP3K12</label>
    </interactant>
    <organismsDiffer>false</organismsDiffer>
    <experiments>2</experiments>
</comment>
<comment type="interaction">
    <interactant intactId="EBI-710176">
        <id>Q70Z53</id>
    </interactant>
    <interactant intactId="EBI-2558739">
        <id>Q70IA6</id>
        <label>MOB2</label>
    </interactant>
    <organismsDiffer>false</organismsDiffer>
    <experiments>3</experiments>
</comment>
<comment type="interaction">
    <interactant intactId="EBI-710176">
        <id>Q70Z53</id>
    </interactant>
    <interactant intactId="EBI-749111">
        <id>Q13435</id>
        <label>SF3B2</label>
    </interactant>
    <organismsDiffer>false</organismsDiffer>
    <experiments>2</experiments>
</comment>
<comment type="interaction">
    <interactant intactId="EBI-710176">
        <id>Q70Z53</id>
    </interactant>
    <interactant intactId="EBI-725997">
        <id>Q8WV44</id>
        <label>TRIM41</label>
    </interactant>
    <organismsDiffer>false</organismsDiffer>
    <experiments>4</experiments>
</comment>
<comment type="subcellular location">
    <subcellularLocation>
        <location evidence="4 6">Nucleus</location>
    </subcellularLocation>
</comment>
<comment type="alternative products">
    <event type="alternative splicing"/>
    <isoform>
        <id>Q70Z53-1</id>
        <name>1</name>
        <name>FRA10AC1-1</name>
        <sequence type="displayed"/>
    </isoform>
    <isoform>
        <id>Q70Z53-2</id>
        <name>2</name>
        <name>FRA10AC1-2</name>
        <sequence type="described" ref="VSP_015126 VSP_015127"/>
    </isoform>
    <isoform>
        <id>Q70Z53-3</id>
        <name>3</name>
        <name>FRA10AC1-3.1</name>
        <sequence type="described" ref="VSP_015123"/>
    </isoform>
    <isoform>
        <id>Q70Z53-4</id>
        <name>4</name>
        <name>FRA10AC1-3.2</name>
        <sequence type="described" ref="VSP_015125 VSP_015128"/>
    </isoform>
    <isoform>
        <id>Q70Z53-5</id>
        <name>5</name>
        <name>FRA10AC1-3.3</name>
        <sequence type="described" ref="VSP_015124"/>
    </isoform>
</comment>
<comment type="tissue specificity">
    <text evidence="4">Ubiquitously expressed with higher expression in brain, heart, skeletal muscle, kidney and liver.</text>
</comment>
<comment type="polymorphism">
    <text evidence="4 11">Expansion of a polymorphic CGG repeat within the 5'-UTR of FRA10AC1 results in expression of the folate-sensitive fragile site FRA10A. The number of the CGG repeats normally varies in the population from 8 to 14. In contrast, individuals cytogenetically expressing the fragile site have at least 200 CGG repeats (PubMed:15203205). No distinct phenotype has been associated with expression of FRA10A. Nevertheless, some studies have proposed that this fragile site expression might be associated with intellectual disability, tumorigenesis, or neurological disorders. However, these associations can be attributed to ascertainment bias.</text>
</comment>
<comment type="disease" evidence="6 7 8">
    <disease id="DI-06545">
        <name>Neurodevelopmental disorder with growth retardation, dysmorphic facies, and corpus callosum abnormalities</name>
        <acronym>NEDGFC</acronym>
        <description>An autosomal recessive neurodevelopmental disorder characterized by developmental delay, intellectual disability, and absent speech. Patients have microcephaly, hypoplasia or agenesis of the corpus callosum, growth retardation, and craniofacial dysmorphism.</description>
        <dbReference type="MIM" id="620113"/>
    </disease>
    <text>The disease is caused by variants affecting the gene represented in this entry.</text>
</comment>
<comment type="sequence caution" evidence="10">
    <conflict type="miscellaneous discrepancy">
        <sequence resource="EMBL-CDS" id="AAK55529"/>
    </conflict>
    <text>Chimeric cDNA.</text>
</comment>